<reference key="1">
    <citation type="journal article" date="1994" name="J. Biol. Chem.">
        <title>Relationship of protein structure of isoleucyl-tRNA synthetase with pseudomonic acid resistance of Escherichia coli. A proposed mode of action of pseudomonic acid as an inhibitor of isoleucyl-tRNA synthetase.</title>
        <authorList>
            <person name="Yanagisawa T."/>
            <person name="Lee J.T."/>
            <person name="Wu H.C."/>
            <person name="Kawakami M."/>
        </authorList>
    </citation>
    <scope>NUCLEOTIDE SEQUENCE [GENOMIC DNA]</scope>
    <source>
        <strain>ATCC 49323 / NCIMB 10586</strain>
    </source>
</reference>
<reference key="2">
    <citation type="journal article" date="1990" name="J. Bacteriol.">
        <title>Nucleotide sequence of the Pseudomonas fluorescens signal peptidase II gene (lsp) and flanking genes.</title>
        <authorList>
            <person name="Isaki L."/>
            <person name="Beers R."/>
            <person name="Wu H.C."/>
        </authorList>
    </citation>
    <scope>NUCLEOTIDE SEQUENCE [GENOMIC DNA] OF 1-29 AND 701-943</scope>
    <source>
        <strain>ATCC 49323 / NCIMB 10586</strain>
    </source>
</reference>
<reference key="3">
    <citation type="journal article" date="2003" name="J. Biol. Chem.">
        <title>How does Pseudomonas fluorescens avoid suicide from its antibiotic pseudomonic acid? Evidence for two evolutionarily distinct isoleucyl-tRNA synthetases conferring self-defense.</title>
        <authorList>
            <person name="Yanagisawa T."/>
            <person name="Kawakami M."/>
        </authorList>
    </citation>
    <scope>RESISTANCE TO MUPIROCIN</scope>
    <source>
        <strain>ATCC 49323 / NCIMB 10586</strain>
    </source>
</reference>
<gene>
    <name type="primary">ileS1</name>
    <name type="synonym">ileS</name>
</gene>
<keyword id="KW-0030">Aminoacyl-tRNA synthetase</keyword>
<keyword id="KW-0046">Antibiotic resistance</keyword>
<keyword id="KW-0067">ATP-binding</keyword>
<keyword id="KW-0963">Cytoplasm</keyword>
<keyword id="KW-0436">Ligase</keyword>
<keyword id="KW-0479">Metal-binding</keyword>
<keyword id="KW-0547">Nucleotide-binding</keyword>
<keyword id="KW-0648">Protein biosynthesis</keyword>
<keyword id="KW-0862">Zinc</keyword>
<accession>P18330</accession>
<proteinExistence type="inferred from homology"/>
<name>SYI1_PSEFL</name>
<organism>
    <name type="scientific">Pseudomonas fluorescens</name>
    <dbReference type="NCBI Taxonomy" id="294"/>
    <lineage>
        <taxon>Bacteria</taxon>
        <taxon>Pseudomonadati</taxon>
        <taxon>Pseudomonadota</taxon>
        <taxon>Gammaproteobacteria</taxon>
        <taxon>Pseudomonadales</taxon>
        <taxon>Pseudomonadaceae</taxon>
        <taxon>Pseudomonas</taxon>
    </lineage>
</organism>
<evidence type="ECO:0000250" key="1"/>
<evidence type="ECO:0000305" key="2"/>
<feature type="chain" id="PRO_0000098445" description="Isoleucine--tRNA ligase 1">
    <location>
        <begin position="1"/>
        <end position="943"/>
    </location>
</feature>
<feature type="short sequence motif" description="'HIGH' region">
    <location>
        <begin position="58"/>
        <end position="68"/>
    </location>
</feature>
<feature type="short sequence motif" description="'KMSKS' region">
    <location>
        <begin position="608"/>
        <end position="612"/>
    </location>
</feature>
<feature type="binding site" evidence="1">
    <location>
        <position position="567"/>
    </location>
    <ligand>
        <name>L-isoleucyl-5'-AMP</name>
        <dbReference type="ChEBI" id="CHEBI:178002"/>
    </ligand>
</feature>
<feature type="binding site" evidence="1">
    <location>
        <position position="611"/>
    </location>
    <ligand>
        <name>ATP</name>
        <dbReference type="ChEBI" id="CHEBI:30616"/>
    </ligand>
</feature>
<feature type="binding site" evidence="1">
    <location>
        <position position="906"/>
    </location>
    <ligand>
        <name>Zn(2+)</name>
        <dbReference type="ChEBI" id="CHEBI:29105"/>
    </ligand>
</feature>
<feature type="binding site" evidence="1">
    <location>
        <position position="909"/>
    </location>
    <ligand>
        <name>Zn(2+)</name>
        <dbReference type="ChEBI" id="CHEBI:29105"/>
    </ligand>
</feature>
<feature type="binding site" evidence="1">
    <location>
        <position position="926"/>
    </location>
    <ligand>
        <name>Zn(2+)</name>
        <dbReference type="ChEBI" id="CHEBI:29105"/>
    </ligand>
</feature>
<feature type="binding site" evidence="1">
    <location>
        <position position="929"/>
    </location>
    <ligand>
        <name>Zn(2+)</name>
        <dbReference type="ChEBI" id="CHEBI:29105"/>
    </ligand>
</feature>
<feature type="sequence conflict" description="In Ref. 2." evidence="2" ref="2">
    <original>IL</original>
    <variation>SC</variation>
    <location>
        <begin position="28"/>
        <end position="29"/>
    </location>
</feature>
<feature type="sequence conflict" description="In Ref. 2." evidence="2" ref="2">
    <original>QT</original>
    <variation>DR</variation>
    <location>
        <begin position="755"/>
        <end position="756"/>
    </location>
</feature>
<feature type="sequence conflict" description="In Ref. 2." evidence="2" ref="2">
    <original>LY</original>
    <variation>VP</variation>
    <location>
        <begin position="758"/>
        <end position="759"/>
    </location>
</feature>
<feature type="sequence conflict" description="In Ref. 2." evidence="2" ref="2">
    <original>ISEA</original>
    <variation>QRR</variation>
    <location>
        <begin position="761"/>
        <end position="764"/>
    </location>
</feature>
<sequence>MTDYKATLNLPDTAFPMKAGLPQREPQILQRWNSIGLYGKLREIGKDRPKFVLHDGPPYANGTIHIGHALNKILKDMILRSKTLSGFDAPYVPGWDCHGLPIEHKVEVTYGKNLGADKTRELCRAYATEQIEGQKSEFIRLGVLGEWDNPYKTMNFKNEAGEIRALAEIVKGGFVFKGLKPVNWCFDCGSALAEAEVEYEDKKSSTIDVAFPIADDAKLAEAFGLASLAKPAAIVIWTTTPWTIPANQALNVHPEFTYALVDVGDRLLVLAEEMVESCLARYELQGSVIATATGSALELINFRHPFYDRLSPVYLADYVELGSGTGIVHCSPAYGVDDFVICKKYGMVNDDIINPVQSNGVYVPSLEFFGGQFIFKADQPIIEKLREVGALMQTAAIQHSYMHCWRHKTPLIYRATAQWFIGMDKEPTSGDTLRVRSLKAIEDTKFVPSWGQARLHSMIANRPDWCISRQRNWGVPIPFFLNKESGELHPRTVELMEVVAQRVEQQGIEAWFKLDAAELLGDEAPLYDKISDTLDVWFDSGTTHWHVLRGSHPMGHETGPRADLYLEGSDQHRGWFHSSLLTGCAIDNHAPYRELLTHGFTVDETGRKMSKSLKNVIEPKKINDTLGADIMRLWVASTDYSGEIAVSDQILARSADAYRRIRNTARFMLSNLTGFNPASDLLPAEDMLALDRWAVDRTLLLQRELQEHYGEYRFWNVYSKIHNFCVQELGGFYLDIIKDRQYTTGANSKARRSAQTALYHISEALVRWIAPILAFTADELWEYLPGERNESVMLNTWYEGLTELPADFELGREYWEGVMAVKVAVNKELEVQRAAKAVGGNLQAEVTLFAEDGLTADLAKLSNELRFVLITSTASLAPFTQAPADAVATEVPGLKLKVVKSAFPKCARCWHCREDVGVNPEHPEICGRCVDNISGEGEVRHYA</sequence>
<comment type="function">
    <text evidence="1">Catalyzes the attachment of isoleucine to tRNA(Ile). As IleRS can inadvertently accommodate and process structurally similar amino acids such as valine, to avoid such errors it has two additional distinct tRNA(Ile)-dependent editing activities. One activity is designated as 'pretransfer' editing and involves the hydrolysis of activated Val-AMP. The other activity is designated 'posttransfer' editing and involves deacylation of mischarged Val-tRNA(Ile) (By similarity).</text>
</comment>
<comment type="function">
    <text>Confers resistance to the antibiotic mupirocin (pseudomonic acid A), an Ile-analog produced by P.fluorescens NCIMB 10586 itself that competitively inhibits activation by Ile-tRNA synthetase, thus inhibiting protein biosynthesis.</text>
</comment>
<comment type="catalytic activity">
    <reaction>
        <text>tRNA(Ile) + L-isoleucine + ATP = L-isoleucyl-tRNA(Ile) + AMP + diphosphate</text>
        <dbReference type="Rhea" id="RHEA:11060"/>
        <dbReference type="Rhea" id="RHEA-COMP:9666"/>
        <dbReference type="Rhea" id="RHEA-COMP:9695"/>
        <dbReference type="ChEBI" id="CHEBI:30616"/>
        <dbReference type="ChEBI" id="CHEBI:33019"/>
        <dbReference type="ChEBI" id="CHEBI:58045"/>
        <dbReference type="ChEBI" id="CHEBI:78442"/>
        <dbReference type="ChEBI" id="CHEBI:78528"/>
        <dbReference type="ChEBI" id="CHEBI:456215"/>
        <dbReference type="EC" id="6.1.1.5"/>
    </reaction>
</comment>
<comment type="cofactor">
    <cofactor evidence="1">
        <name>Zn(2+)</name>
        <dbReference type="ChEBI" id="CHEBI:29105"/>
    </cofactor>
    <text evidence="1">Binds 1 zinc ion per subunit.</text>
</comment>
<comment type="subunit">
    <text>Monomer.</text>
</comment>
<comment type="subcellular location">
    <subcellularLocation>
        <location>Cytoplasm</location>
    </subcellularLocation>
</comment>
<comment type="domain">
    <text evidence="1">IleRS has two distinct active sites: one for aminoacylation and one for editing. The misactivated valine is translocated from the active site to the editing site, which sterically excludes the correctly activated isoleucine. The single editing site contains two valyl binding pockets, one specific for each substrate (Val-AMP or Val-tRNA(Ile)) (By similarity).</text>
</comment>
<comment type="miscellaneous">
    <text>P.fluorescens NCIMB 10586 possesses two distinct IleRSs (IleRS-R1 and IleRS-R2), each with a different level of sensitivity to mupirocin. Purified IleRs-R2 shows no sensitivity to mupirocin even at a concentration of 5 mM, 100'000 fold higher than the Ki value of IleRS-R1.</text>
</comment>
<comment type="similarity">
    <text evidence="2">Belongs to the class-I aminoacyl-tRNA synthetase family. IleS type 1 subfamily.</text>
</comment>
<dbReference type="EC" id="6.1.1.5"/>
<dbReference type="EMBL" id="X80132">
    <property type="protein sequence ID" value="CAA56431.1"/>
    <property type="molecule type" value="Genomic_DNA"/>
</dbReference>
<dbReference type="EMBL" id="M35366">
    <property type="protein sequence ID" value="AAA25883.1"/>
    <property type="molecule type" value="Genomic_DNA"/>
</dbReference>
<dbReference type="EMBL" id="M35367">
    <property type="protein sequence ID" value="AAA26022.1"/>
    <property type="status" value="ALT_SEQ"/>
    <property type="molecule type" value="Genomic_DNA"/>
</dbReference>
<dbReference type="PIR" id="A37152">
    <property type="entry name" value="A37152"/>
</dbReference>
<dbReference type="SMR" id="P18330"/>
<dbReference type="eggNOG" id="COG0060">
    <property type="taxonomic scope" value="Bacteria"/>
</dbReference>
<dbReference type="SABIO-RK" id="P18330"/>
<dbReference type="GO" id="GO:0005829">
    <property type="term" value="C:cytosol"/>
    <property type="evidence" value="ECO:0007669"/>
    <property type="project" value="TreeGrafter"/>
</dbReference>
<dbReference type="GO" id="GO:0002161">
    <property type="term" value="F:aminoacyl-tRNA deacylase activity"/>
    <property type="evidence" value="ECO:0007669"/>
    <property type="project" value="InterPro"/>
</dbReference>
<dbReference type="GO" id="GO:0005524">
    <property type="term" value="F:ATP binding"/>
    <property type="evidence" value="ECO:0007669"/>
    <property type="project" value="UniProtKB-UniRule"/>
</dbReference>
<dbReference type="GO" id="GO:0004822">
    <property type="term" value="F:isoleucine-tRNA ligase activity"/>
    <property type="evidence" value="ECO:0007669"/>
    <property type="project" value="UniProtKB-UniRule"/>
</dbReference>
<dbReference type="GO" id="GO:0000049">
    <property type="term" value="F:tRNA binding"/>
    <property type="evidence" value="ECO:0007669"/>
    <property type="project" value="InterPro"/>
</dbReference>
<dbReference type="GO" id="GO:0008270">
    <property type="term" value="F:zinc ion binding"/>
    <property type="evidence" value="ECO:0007669"/>
    <property type="project" value="UniProtKB-UniRule"/>
</dbReference>
<dbReference type="GO" id="GO:0006428">
    <property type="term" value="P:isoleucyl-tRNA aminoacylation"/>
    <property type="evidence" value="ECO:0007669"/>
    <property type="project" value="UniProtKB-UniRule"/>
</dbReference>
<dbReference type="GO" id="GO:0046677">
    <property type="term" value="P:response to antibiotic"/>
    <property type="evidence" value="ECO:0007669"/>
    <property type="project" value="UniProtKB-KW"/>
</dbReference>
<dbReference type="CDD" id="cd07960">
    <property type="entry name" value="Anticodon_Ia_Ile_BEm"/>
    <property type="match status" value="1"/>
</dbReference>
<dbReference type="FunFam" id="1.10.730.20:FF:000001">
    <property type="entry name" value="Isoleucine--tRNA ligase"/>
    <property type="match status" value="1"/>
</dbReference>
<dbReference type="FunFam" id="3.40.50.620:FF:000042">
    <property type="entry name" value="Isoleucine--tRNA ligase"/>
    <property type="match status" value="1"/>
</dbReference>
<dbReference type="FunFam" id="3.40.50.620:FF:000048">
    <property type="entry name" value="Isoleucine--tRNA ligase"/>
    <property type="match status" value="1"/>
</dbReference>
<dbReference type="Gene3D" id="1.10.730.20">
    <property type="match status" value="1"/>
</dbReference>
<dbReference type="Gene3D" id="3.40.50.620">
    <property type="entry name" value="HUPs"/>
    <property type="match status" value="2"/>
</dbReference>
<dbReference type="Gene3D" id="3.90.740.10">
    <property type="entry name" value="Valyl/Leucyl/Isoleucyl-tRNA synthetase, editing domain"/>
    <property type="match status" value="1"/>
</dbReference>
<dbReference type="HAMAP" id="MF_02002">
    <property type="entry name" value="Ile_tRNA_synth_type1"/>
    <property type="match status" value="1"/>
</dbReference>
<dbReference type="InterPro" id="IPR001412">
    <property type="entry name" value="aa-tRNA-synth_I_CS"/>
</dbReference>
<dbReference type="InterPro" id="IPR002300">
    <property type="entry name" value="aa-tRNA-synth_Ia"/>
</dbReference>
<dbReference type="InterPro" id="IPR033708">
    <property type="entry name" value="Anticodon_Ile_BEm"/>
</dbReference>
<dbReference type="InterPro" id="IPR002301">
    <property type="entry name" value="Ile-tRNA-ligase"/>
</dbReference>
<dbReference type="InterPro" id="IPR023585">
    <property type="entry name" value="Ile-tRNA-ligase_type1"/>
</dbReference>
<dbReference type="InterPro" id="IPR050081">
    <property type="entry name" value="Ile-tRNA_ligase"/>
</dbReference>
<dbReference type="InterPro" id="IPR013155">
    <property type="entry name" value="M/V/L/I-tRNA-synth_anticd-bd"/>
</dbReference>
<dbReference type="InterPro" id="IPR014729">
    <property type="entry name" value="Rossmann-like_a/b/a_fold"/>
</dbReference>
<dbReference type="InterPro" id="IPR009080">
    <property type="entry name" value="tRNAsynth_Ia_anticodon-bd"/>
</dbReference>
<dbReference type="InterPro" id="IPR009008">
    <property type="entry name" value="Val/Leu/Ile-tRNA-synth_edit"/>
</dbReference>
<dbReference type="InterPro" id="IPR010663">
    <property type="entry name" value="Znf_FPG/IleRS"/>
</dbReference>
<dbReference type="NCBIfam" id="TIGR00392">
    <property type="entry name" value="ileS"/>
    <property type="match status" value="1"/>
</dbReference>
<dbReference type="PANTHER" id="PTHR42765:SF1">
    <property type="entry name" value="ISOLEUCINE--TRNA LIGASE, MITOCHONDRIAL"/>
    <property type="match status" value="1"/>
</dbReference>
<dbReference type="PANTHER" id="PTHR42765">
    <property type="entry name" value="SOLEUCYL-TRNA SYNTHETASE"/>
    <property type="match status" value="1"/>
</dbReference>
<dbReference type="Pfam" id="PF08264">
    <property type="entry name" value="Anticodon_1"/>
    <property type="match status" value="1"/>
</dbReference>
<dbReference type="Pfam" id="PF00133">
    <property type="entry name" value="tRNA-synt_1"/>
    <property type="match status" value="1"/>
</dbReference>
<dbReference type="Pfam" id="PF06827">
    <property type="entry name" value="zf-FPG_IleRS"/>
    <property type="match status" value="1"/>
</dbReference>
<dbReference type="PRINTS" id="PR00984">
    <property type="entry name" value="TRNASYNTHILE"/>
</dbReference>
<dbReference type="SUPFAM" id="SSF47323">
    <property type="entry name" value="Anticodon-binding domain of a subclass of class I aminoacyl-tRNA synthetases"/>
    <property type="match status" value="1"/>
</dbReference>
<dbReference type="SUPFAM" id="SSF52374">
    <property type="entry name" value="Nucleotidylyl transferase"/>
    <property type="match status" value="1"/>
</dbReference>
<dbReference type="SUPFAM" id="SSF50677">
    <property type="entry name" value="ValRS/IleRS/LeuRS editing domain"/>
    <property type="match status" value="1"/>
</dbReference>
<dbReference type="PROSITE" id="PS00178">
    <property type="entry name" value="AA_TRNA_LIGASE_I"/>
    <property type="match status" value="1"/>
</dbReference>
<protein>
    <recommendedName>
        <fullName>Isoleucine--tRNA ligase 1</fullName>
        <ecNumber>6.1.1.5</ecNumber>
    </recommendedName>
    <alternativeName>
        <fullName>Isoleucyl-tRNA synthetase 1</fullName>
        <shortName>IleRS 1</shortName>
    </alternativeName>
</protein>